<dbReference type="SMR" id="P0CU42"/>
<dbReference type="OrthoDB" id="9971011at2759"/>
<dbReference type="GO" id="GO:0005576">
    <property type="term" value="C:extracellular region"/>
    <property type="evidence" value="ECO:0007669"/>
    <property type="project" value="UniProtKB-SubCell"/>
</dbReference>
<dbReference type="GO" id="GO:0008289">
    <property type="term" value="F:lipid binding"/>
    <property type="evidence" value="ECO:0007669"/>
    <property type="project" value="InterPro"/>
</dbReference>
<dbReference type="CDD" id="cd00742">
    <property type="entry name" value="FABP"/>
    <property type="match status" value="1"/>
</dbReference>
<dbReference type="Gene3D" id="2.40.128.20">
    <property type="match status" value="1"/>
</dbReference>
<dbReference type="InterPro" id="IPR012674">
    <property type="entry name" value="Calycin"/>
</dbReference>
<dbReference type="InterPro" id="IPR000463">
    <property type="entry name" value="Fatty_acid-bd"/>
</dbReference>
<dbReference type="PRINTS" id="PR00178">
    <property type="entry name" value="FATTYACIDBP"/>
</dbReference>
<dbReference type="SUPFAM" id="SSF50814">
    <property type="entry name" value="Lipocalins"/>
    <property type="match status" value="1"/>
</dbReference>
<gene>
    <name evidence="4" type="primary">SAHS 68234</name>
</gene>
<reference key="1">
    <citation type="journal article" date="2017" name="Mol. Cell">
        <title>Tardigrades use intrinsically disordered proteins to survive desiccation.</title>
        <authorList>
            <person name="Boothby T.C."/>
            <person name="Tapia H."/>
            <person name="Brozena A.H."/>
            <person name="Piszkiewicz S."/>
            <person name="Smith A.E."/>
            <person name="Giovannini I."/>
            <person name="Rebecchi L."/>
            <person name="Pielak G.J."/>
            <person name="Koshland D."/>
            <person name="Goldstein B."/>
        </authorList>
    </citation>
    <scope>FUNCTION</scope>
    <scope>INDUCTION</scope>
    <scope>DISRUPTION PHENOTYPE</scope>
</reference>
<protein>
    <recommendedName>
        <fullName evidence="4">Secretory-abundant heat soluble protein 68234</fullName>
        <shortName evidence="4">SAHS 68234</shortName>
    </recommendedName>
    <alternativeName>
        <fullName evidence="4">Tardigrade-specific intrinsically disordered protein SAHS 68234</fullName>
        <shortName evidence="4">TDP SAHS 68234</shortName>
    </alternativeName>
</protein>
<accession>P0CU42</accession>
<sequence>MARFLVALALFGVVAMTAATGDAPKEWSGKPWLGKFVAEVTDKSENWEAFVDALGLPEQFGRAPVKTIQKIYKQGDHYHHIFALPDKNFEKDIEFTLGQEVEIKQGEHIAKTKYSEDGEKLVADVSIPTKGKTIRSEYEVQGDQLIKTYKTGDIVAKKWFKKVANPTEAPAQAA</sequence>
<comment type="function">
    <text evidence="3">Secreted heat soluble protein acting as a molecular shield in water-deficient condition (PubMed:28306513). Tardigrade-specific intrinsically disordered proteins (TDPs) are essential for desiccation tolerance by forming non-crystalline amorphous solids upon desiccation, and this vitrified state mirrors their protective capabilities (PubMed:28306513).</text>
</comment>
<comment type="subcellular location">
    <subcellularLocation>
        <location evidence="6">Secreted</location>
    </subcellularLocation>
</comment>
<comment type="induction">
    <text evidence="3">Expression is highly induced during desiccation (PubMed:28306513).</text>
</comment>
<comment type="domain">
    <text evidence="1">SAHS-c1, SAHS-c2 and SAHS-c3 are 3 highly conserved regions within the SAHS protein family (By similarity).</text>
</comment>
<comment type="disruption phenotype">
    <text evidence="3">Results in a significant decrease in survival after desiccation but does not affect survival under frozen conditions (PubMed:28306513).</text>
</comment>
<comment type="miscellaneous">
    <text evidence="3">Trehalose, a disaccharide essential for several organisms to survive drying, is detected at low levels or not at all in some tardigrade species, indicating that tardigrades possess potentially novel mechanisms for surviving desiccation involving tardigrade-specific intrinsically disordered proteins (TDPs) (PubMed:28306513).</text>
</comment>
<comment type="similarity">
    <text evidence="5">Belongs to the Secretory-abundant heat soluble protein (SAHS) family.</text>
</comment>
<feature type="signal peptide" evidence="2">
    <location>
        <begin position="1"/>
        <end position="19"/>
    </location>
</feature>
<feature type="chain" id="PRO_0000440186" description="Secretory-abundant heat soluble protein 68234" evidence="2">
    <location>
        <begin position="20"/>
        <end position="174"/>
    </location>
</feature>
<feature type="region of interest" description="SAHS-c1" evidence="1">
    <location>
        <begin position="26"/>
        <end position="57"/>
    </location>
</feature>
<feature type="region of interest" description="SAHS-c2" evidence="1">
    <location>
        <begin position="72"/>
        <end position="100"/>
    </location>
</feature>
<feature type="region of interest" description="SAHS-c3" evidence="1">
    <location>
        <begin position="113"/>
        <end position="162"/>
    </location>
</feature>
<name>SAHS4_HYPEX</name>
<evidence type="ECO:0000250" key="1">
    <source>
        <dbReference type="UniProtKB" id="J7MFT5"/>
    </source>
</evidence>
<evidence type="ECO:0000255" key="2"/>
<evidence type="ECO:0000269" key="3">
    <source>
    </source>
</evidence>
<evidence type="ECO:0000303" key="4">
    <source>
    </source>
</evidence>
<evidence type="ECO:0000305" key="5"/>
<evidence type="ECO:0000305" key="6">
    <source>
    </source>
</evidence>
<keyword id="KW-0964">Secreted</keyword>
<keyword id="KW-0732">Signal</keyword>
<keyword id="KW-0346">Stress response</keyword>
<proteinExistence type="evidence at transcript level"/>
<organism evidence="4">
    <name type="scientific">Hypsibius exemplaris</name>
    <name type="common">Freshwater tardigrade</name>
    <dbReference type="NCBI Taxonomy" id="2072580"/>
    <lineage>
        <taxon>Eukaryota</taxon>
        <taxon>Metazoa</taxon>
        <taxon>Ecdysozoa</taxon>
        <taxon>Tardigrada</taxon>
        <taxon>Eutardigrada</taxon>
        <taxon>Parachela</taxon>
        <taxon>Hypsibioidea</taxon>
        <taxon>Hypsibiidae</taxon>
        <taxon>Hypsibius</taxon>
    </lineage>
</organism>